<comment type="function">
    <text evidence="1">The actual biological function of YdiB remains unclear, nor is it known whether 3-dehydroshikimate or quinate represents the natural substrate. Catalyzes the reversible NAD-dependent reduction of both 3-dehydroshikimate (DHSA) and 3-dehydroquinate to yield shikimate (SA) and quinate, respectively. It can use both NAD or NADP for catalysis, however it has higher catalytic efficiency with NAD.</text>
</comment>
<comment type="catalytic activity">
    <reaction evidence="1">
        <text>L-quinate + NAD(+) = 3-dehydroquinate + NADH + H(+)</text>
        <dbReference type="Rhea" id="RHEA:22364"/>
        <dbReference type="ChEBI" id="CHEBI:15378"/>
        <dbReference type="ChEBI" id="CHEBI:29751"/>
        <dbReference type="ChEBI" id="CHEBI:32364"/>
        <dbReference type="ChEBI" id="CHEBI:57540"/>
        <dbReference type="ChEBI" id="CHEBI:57945"/>
        <dbReference type="EC" id="1.1.1.282"/>
    </reaction>
</comment>
<comment type="catalytic activity">
    <reaction evidence="1">
        <text>L-quinate + NADP(+) = 3-dehydroquinate + NADPH + H(+)</text>
        <dbReference type="Rhea" id="RHEA:18425"/>
        <dbReference type="ChEBI" id="CHEBI:15378"/>
        <dbReference type="ChEBI" id="CHEBI:29751"/>
        <dbReference type="ChEBI" id="CHEBI:32364"/>
        <dbReference type="ChEBI" id="CHEBI:57783"/>
        <dbReference type="ChEBI" id="CHEBI:58349"/>
        <dbReference type="EC" id="1.1.1.282"/>
    </reaction>
</comment>
<comment type="catalytic activity">
    <reaction evidence="1">
        <text>shikimate + NADP(+) = 3-dehydroshikimate + NADPH + H(+)</text>
        <dbReference type="Rhea" id="RHEA:17737"/>
        <dbReference type="ChEBI" id="CHEBI:15378"/>
        <dbReference type="ChEBI" id="CHEBI:16630"/>
        <dbReference type="ChEBI" id="CHEBI:36208"/>
        <dbReference type="ChEBI" id="CHEBI:57783"/>
        <dbReference type="ChEBI" id="CHEBI:58349"/>
        <dbReference type="EC" id="1.1.1.282"/>
    </reaction>
</comment>
<comment type="catalytic activity">
    <reaction evidence="1">
        <text>shikimate + NAD(+) = 3-dehydroshikimate + NADH + H(+)</text>
        <dbReference type="Rhea" id="RHEA:17741"/>
        <dbReference type="ChEBI" id="CHEBI:15378"/>
        <dbReference type="ChEBI" id="CHEBI:16630"/>
        <dbReference type="ChEBI" id="CHEBI:36208"/>
        <dbReference type="ChEBI" id="CHEBI:57540"/>
        <dbReference type="ChEBI" id="CHEBI:57945"/>
        <dbReference type="EC" id="1.1.1.282"/>
    </reaction>
</comment>
<comment type="pathway">
    <text evidence="1">Metabolic intermediate biosynthesis; chorismate biosynthesis; chorismate from D-erythrose 4-phosphate and phosphoenolpyruvate: step 4/7.</text>
</comment>
<comment type="subunit">
    <text evidence="1">Homodimer.</text>
</comment>
<comment type="similarity">
    <text evidence="1">Belongs to the shikimate dehydrogenase family.</text>
</comment>
<sequence>MDVTAKYELIGLMAYPIRHSLSPEMQNKALEKAGLPFTYMAFEVDNDSFPAAIEGLKALKMRGTGVSMPNKQLACEYVDELTPAAKLVGAINTIVNDDGYLRGYNTDGTGHIRAIKESGFDIKGKTMVLLGAGGASTAIGAQGAIEGLKEIKLFNRRDEFFDKALAFAQRVNENTDCVVTVTDLADQQAFAEALASADILTNGTKVGMKPLENESLVNDISLLHPGLLVTECVYNPHMTKLLQQAQQAGCKTIDGYGMLLWQGAEQFTLWTGKDFPLEYVKQVMGFGA</sequence>
<keyword id="KW-0028">Amino-acid biosynthesis</keyword>
<keyword id="KW-0057">Aromatic amino acid biosynthesis</keyword>
<keyword id="KW-0520">NAD</keyword>
<keyword id="KW-0521">NADP</keyword>
<keyword id="KW-0560">Oxidoreductase</keyword>
<keyword id="KW-1185">Reference proteome</keyword>
<organism>
    <name type="scientific">Escherichia coli O45:K1 (strain S88 / ExPEC)</name>
    <dbReference type="NCBI Taxonomy" id="585035"/>
    <lineage>
        <taxon>Bacteria</taxon>
        <taxon>Pseudomonadati</taxon>
        <taxon>Pseudomonadota</taxon>
        <taxon>Gammaproteobacteria</taxon>
        <taxon>Enterobacterales</taxon>
        <taxon>Enterobacteriaceae</taxon>
        <taxon>Escherichia</taxon>
    </lineage>
</organism>
<protein>
    <recommendedName>
        <fullName evidence="1">Quinate/shikimate dehydrogenase</fullName>
        <ecNumber evidence="1">1.1.1.282</ecNumber>
    </recommendedName>
    <alternativeName>
        <fullName evidence="1">NAD-dependent shikimate 5-dehydrogenase</fullName>
    </alternativeName>
</protein>
<name>YDIB_ECO45</name>
<feature type="chain" id="PRO_1000147547" description="Quinate/shikimate dehydrogenase">
    <location>
        <begin position="1"/>
        <end position="288"/>
    </location>
</feature>
<feature type="binding site" evidence="1">
    <location>
        <position position="71"/>
    </location>
    <ligand>
        <name>substrate</name>
    </ligand>
</feature>
<feature type="binding site" evidence="1">
    <location>
        <position position="107"/>
    </location>
    <ligand>
        <name>substrate</name>
    </ligand>
</feature>
<feature type="binding site" evidence="1">
    <location>
        <begin position="132"/>
        <end position="135"/>
    </location>
    <ligand>
        <name>NAD(+)</name>
        <dbReference type="ChEBI" id="CHEBI:57540"/>
    </ligand>
</feature>
<feature type="binding site" evidence="1">
    <location>
        <begin position="155"/>
        <end position="158"/>
    </location>
    <ligand>
        <name>NAD(+)</name>
        <dbReference type="ChEBI" id="CHEBI:57540"/>
    </ligand>
</feature>
<feature type="binding site" evidence="1">
    <location>
        <position position="205"/>
    </location>
    <ligand>
        <name>NAD(+)</name>
        <dbReference type="ChEBI" id="CHEBI:57540"/>
    </ligand>
</feature>
<feature type="binding site" evidence="1">
    <location>
        <begin position="232"/>
        <end position="235"/>
    </location>
    <ligand>
        <name>NAD(+)</name>
        <dbReference type="ChEBI" id="CHEBI:57540"/>
    </ligand>
</feature>
<feature type="binding site" evidence="1">
    <location>
        <position position="255"/>
    </location>
    <ligand>
        <name>NAD(+)</name>
        <dbReference type="ChEBI" id="CHEBI:57540"/>
    </ligand>
</feature>
<reference key="1">
    <citation type="journal article" date="2009" name="PLoS Genet.">
        <title>Organised genome dynamics in the Escherichia coli species results in highly diverse adaptive paths.</title>
        <authorList>
            <person name="Touchon M."/>
            <person name="Hoede C."/>
            <person name="Tenaillon O."/>
            <person name="Barbe V."/>
            <person name="Baeriswyl S."/>
            <person name="Bidet P."/>
            <person name="Bingen E."/>
            <person name="Bonacorsi S."/>
            <person name="Bouchier C."/>
            <person name="Bouvet O."/>
            <person name="Calteau A."/>
            <person name="Chiapello H."/>
            <person name="Clermont O."/>
            <person name="Cruveiller S."/>
            <person name="Danchin A."/>
            <person name="Diard M."/>
            <person name="Dossat C."/>
            <person name="Karoui M.E."/>
            <person name="Frapy E."/>
            <person name="Garry L."/>
            <person name="Ghigo J.M."/>
            <person name="Gilles A.M."/>
            <person name="Johnson J."/>
            <person name="Le Bouguenec C."/>
            <person name="Lescat M."/>
            <person name="Mangenot S."/>
            <person name="Martinez-Jehanne V."/>
            <person name="Matic I."/>
            <person name="Nassif X."/>
            <person name="Oztas S."/>
            <person name="Petit M.A."/>
            <person name="Pichon C."/>
            <person name="Rouy Z."/>
            <person name="Ruf C.S."/>
            <person name="Schneider D."/>
            <person name="Tourret J."/>
            <person name="Vacherie B."/>
            <person name="Vallenet D."/>
            <person name="Medigue C."/>
            <person name="Rocha E.P.C."/>
            <person name="Denamur E."/>
        </authorList>
    </citation>
    <scope>NUCLEOTIDE SEQUENCE [LARGE SCALE GENOMIC DNA]</scope>
    <source>
        <strain>S88 / ExPEC</strain>
    </source>
</reference>
<accession>B7MAQ2</accession>
<evidence type="ECO:0000255" key="1">
    <source>
        <dbReference type="HAMAP-Rule" id="MF_01578"/>
    </source>
</evidence>
<dbReference type="EC" id="1.1.1.282" evidence="1"/>
<dbReference type="EMBL" id="CU928161">
    <property type="protein sequence ID" value="CAR03051.1"/>
    <property type="molecule type" value="Genomic_DNA"/>
</dbReference>
<dbReference type="RefSeq" id="WP_000383457.1">
    <property type="nucleotide sequence ID" value="NC_011742.1"/>
</dbReference>
<dbReference type="SMR" id="B7MAQ2"/>
<dbReference type="KEGG" id="ecz:ECS88_1742"/>
<dbReference type="HOGENOM" id="CLU_044063_4_4_6"/>
<dbReference type="UniPathway" id="UPA00053">
    <property type="reaction ID" value="UER00087"/>
</dbReference>
<dbReference type="Proteomes" id="UP000000747">
    <property type="component" value="Chromosome"/>
</dbReference>
<dbReference type="GO" id="GO:0030266">
    <property type="term" value="F:quinate 3-dehydrogenase (NAD+) activity"/>
    <property type="evidence" value="ECO:0007669"/>
    <property type="project" value="UniProtKB-UniRule"/>
</dbReference>
<dbReference type="GO" id="GO:0052733">
    <property type="term" value="F:quinate 3-dehydrogenase (NADP+) activity"/>
    <property type="evidence" value="ECO:0007669"/>
    <property type="project" value="InterPro"/>
</dbReference>
<dbReference type="GO" id="GO:0052734">
    <property type="term" value="F:shikimate 3-dehydrogenase (NAD+) activity"/>
    <property type="evidence" value="ECO:0007669"/>
    <property type="project" value="InterPro"/>
</dbReference>
<dbReference type="GO" id="GO:0004764">
    <property type="term" value="F:shikimate 3-dehydrogenase (NADP+) activity"/>
    <property type="evidence" value="ECO:0007669"/>
    <property type="project" value="UniProtKB-UniRule"/>
</dbReference>
<dbReference type="GO" id="GO:0008652">
    <property type="term" value="P:amino acid biosynthetic process"/>
    <property type="evidence" value="ECO:0007669"/>
    <property type="project" value="UniProtKB-KW"/>
</dbReference>
<dbReference type="GO" id="GO:0009073">
    <property type="term" value="P:aromatic amino acid family biosynthetic process"/>
    <property type="evidence" value="ECO:0007669"/>
    <property type="project" value="UniProtKB-KW"/>
</dbReference>
<dbReference type="GO" id="GO:0009423">
    <property type="term" value="P:chorismate biosynthetic process"/>
    <property type="evidence" value="ECO:0007669"/>
    <property type="project" value="UniProtKB-UniRule"/>
</dbReference>
<dbReference type="GO" id="GO:0019632">
    <property type="term" value="P:shikimate metabolic process"/>
    <property type="evidence" value="ECO:0007669"/>
    <property type="project" value="TreeGrafter"/>
</dbReference>
<dbReference type="CDD" id="cd01065">
    <property type="entry name" value="NAD_bind_Shikimate_DH"/>
    <property type="match status" value="1"/>
</dbReference>
<dbReference type="FunFam" id="3.40.50.10860:FF:000004">
    <property type="entry name" value="Quinate/shikimate dehydrogenase"/>
    <property type="match status" value="1"/>
</dbReference>
<dbReference type="FunFam" id="3.40.50.720:FF:000086">
    <property type="entry name" value="Quinate/shikimate dehydrogenase"/>
    <property type="match status" value="1"/>
</dbReference>
<dbReference type="Gene3D" id="3.40.50.10860">
    <property type="entry name" value="Leucine Dehydrogenase, chain A, domain 1"/>
    <property type="match status" value="1"/>
</dbReference>
<dbReference type="Gene3D" id="3.40.50.720">
    <property type="entry name" value="NAD(P)-binding Rossmann-like Domain"/>
    <property type="match status" value="1"/>
</dbReference>
<dbReference type="HAMAP" id="MF_00222">
    <property type="entry name" value="Shikimate_DH_AroE"/>
    <property type="match status" value="1"/>
</dbReference>
<dbReference type="HAMAP" id="MF_01578">
    <property type="entry name" value="Shikimate_DH_YdiB"/>
    <property type="match status" value="1"/>
</dbReference>
<dbReference type="InterPro" id="IPR046346">
    <property type="entry name" value="Aminoacid_DH-like_N_sf"/>
</dbReference>
<dbReference type="InterPro" id="IPR036291">
    <property type="entry name" value="NAD(P)-bd_dom_sf"/>
</dbReference>
<dbReference type="InterPro" id="IPR022872">
    <property type="entry name" value="Quinate/Shikimate_DH"/>
</dbReference>
<dbReference type="InterPro" id="IPR041121">
    <property type="entry name" value="SDH_C"/>
</dbReference>
<dbReference type="InterPro" id="IPR013708">
    <property type="entry name" value="Shikimate_DH-bd_N"/>
</dbReference>
<dbReference type="InterPro" id="IPR022893">
    <property type="entry name" value="Shikimate_DH_fam"/>
</dbReference>
<dbReference type="NCBIfam" id="NF009390">
    <property type="entry name" value="PRK12749.1"/>
    <property type="match status" value="1"/>
</dbReference>
<dbReference type="PANTHER" id="PTHR21089:SF1">
    <property type="entry name" value="BIFUNCTIONAL 3-DEHYDROQUINATE DEHYDRATASE_SHIKIMATE DEHYDROGENASE, CHLOROPLASTIC"/>
    <property type="match status" value="1"/>
</dbReference>
<dbReference type="PANTHER" id="PTHR21089">
    <property type="entry name" value="SHIKIMATE DEHYDROGENASE"/>
    <property type="match status" value="1"/>
</dbReference>
<dbReference type="Pfam" id="PF18317">
    <property type="entry name" value="SDH_C"/>
    <property type="match status" value="1"/>
</dbReference>
<dbReference type="Pfam" id="PF08501">
    <property type="entry name" value="Shikimate_dh_N"/>
    <property type="match status" value="1"/>
</dbReference>
<dbReference type="SUPFAM" id="SSF53223">
    <property type="entry name" value="Aminoacid dehydrogenase-like, N-terminal domain"/>
    <property type="match status" value="1"/>
</dbReference>
<dbReference type="SUPFAM" id="SSF51735">
    <property type="entry name" value="NAD(P)-binding Rossmann-fold domains"/>
    <property type="match status" value="1"/>
</dbReference>
<proteinExistence type="inferred from homology"/>
<gene>
    <name evidence="1" type="primary">ydiB</name>
    <name type="ordered locus">ECS88_1742</name>
</gene>